<name>Y075_AFV1Y</name>
<keyword id="KW-1185">Reference proteome</keyword>
<organism>
    <name type="scientific">Acidianus filamentous virus 1 (isolate United States/Yellowstone)</name>
    <name type="common">AFV-1</name>
    <dbReference type="NCBI Taxonomy" id="654909"/>
    <lineage>
        <taxon>Viruses</taxon>
        <taxon>Adnaviria</taxon>
        <taxon>Zilligvirae</taxon>
        <taxon>Taleaviricota</taxon>
        <taxon>Tokiviricetes</taxon>
        <taxon>Ligamenvirales</taxon>
        <taxon>Ungulaviridae</taxon>
        <taxon>Captovirus</taxon>
        <taxon>Acidianus filamentous virus 1</taxon>
    </lineage>
</organism>
<accession>Q70LB1</accession>
<sequence length="75" mass="8788">MHAKIEIEIEEEKDGSLILKYNGMKIGDLNDVNPADELRLVNELIKVREKEMSTSDINKEIEHRLAKLLAWYYTE</sequence>
<feature type="chain" id="PRO_0000384545" description="Uncharacterized protein ORF75">
    <location>
        <begin position="1"/>
        <end position="75"/>
    </location>
</feature>
<gene>
    <name type="ORF">ORF75</name>
</gene>
<dbReference type="EMBL" id="AJ567472">
    <property type="protein sequence ID" value="CAD98969.1"/>
    <property type="molecule type" value="Genomic_DNA"/>
</dbReference>
<dbReference type="RefSeq" id="YP_003765.1">
    <property type="nucleotide sequence ID" value="NC_005830.1"/>
</dbReference>
<dbReference type="SMR" id="Q70LB1"/>
<dbReference type="KEGG" id="vg:2769180"/>
<dbReference type="Proteomes" id="UP000000514">
    <property type="component" value="Genome"/>
</dbReference>
<proteinExistence type="predicted"/>
<organismHost>
    <name type="scientific">Acidianus hospitalis</name>
    <dbReference type="NCBI Taxonomy" id="563177"/>
</organismHost>
<organismHost>
    <name type="scientific">Acidianus infernus</name>
    <dbReference type="NCBI Taxonomy" id="12915"/>
</organismHost>
<reference key="1">
    <citation type="journal article" date="2003" name="Virology">
        <title>AFV1, a novel virus infecting hyperthermophilic archaea of the genus acidianus.</title>
        <authorList>
            <person name="Bettstetter M."/>
            <person name="Peng X."/>
            <person name="Garrett R.A."/>
            <person name="Prangishvili D."/>
        </authorList>
    </citation>
    <scope>NUCLEOTIDE SEQUENCE [GENOMIC DNA]</scope>
</reference>
<protein>
    <recommendedName>
        <fullName>Uncharacterized protein ORF75</fullName>
    </recommendedName>
</protein>